<name>MINE_SHEPC</name>
<sequence>MSLLDYFKSKKKPSTAVMAKERLQIIVAHQRGQRDTPDYFPQMKQEIIAVIRKYVQISDDQVSVQLDQNDDNLSVLELNVTLPDR</sequence>
<evidence type="ECO:0000255" key="1">
    <source>
        <dbReference type="HAMAP-Rule" id="MF_00262"/>
    </source>
</evidence>
<comment type="function">
    <text evidence="1">Prevents the cell division inhibition by proteins MinC and MinD at internal division sites while permitting inhibition at polar sites. This ensures cell division at the proper site by restricting the formation of a division septum at the midpoint of the long axis of the cell.</text>
</comment>
<comment type="similarity">
    <text evidence="1">Belongs to the MinE family.</text>
</comment>
<dbReference type="EMBL" id="CP000681">
    <property type="protein sequence ID" value="ABP75488.1"/>
    <property type="molecule type" value="Genomic_DNA"/>
</dbReference>
<dbReference type="SMR" id="A4Y6A5"/>
<dbReference type="STRING" id="319224.Sputcn32_1763"/>
<dbReference type="KEGG" id="spc:Sputcn32_1763"/>
<dbReference type="eggNOG" id="COG0851">
    <property type="taxonomic scope" value="Bacteria"/>
</dbReference>
<dbReference type="HOGENOM" id="CLU_137929_2_2_6"/>
<dbReference type="GO" id="GO:0051301">
    <property type="term" value="P:cell division"/>
    <property type="evidence" value="ECO:0007669"/>
    <property type="project" value="UniProtKB-KW"/>
</dbReference>
<dbReference type="GO" id="GO:0032955">
    <property type="term" value="P:regulation of division septum assembly"/>
    <property type="evidence" value="ECO:0007669"/>
    <property type="project" value="InterPro"/>
</dbReference>
<dbReference type="FunFam" id="3.30.1070.10:FF:000001">
    <property type="entry name" value="Cell division topological specificity factor"/>
    <property type="match status" value="1"/>
</dbReference>
<dbReference type="Gene3D" id="3.30.1070.10">
    <property type="entry name" value="Cell division topological specificity factor MinE"/>
    <property type="match status" value="1"/>
</dbReference>
<dbReference type="HAMAP" id="MF_00262">
    <property type="entry name" value="MinE"/>
    <property type="match status" value="1"/>
</dbReference>
<dbReference type="InterPro" id="IPR005527">
    <property type="entry name" value="MinE"/>
</dbReference>
<dbReference type="InterPro" id="IPR036707">
    <property type="entry name" value="MinE_sf"/>
</dbReference>
<dbReference type="NCBIfam" id="TIGR01215">
    <property type="entry name" value="minE"/>
    <property type="match status" value="1"/>
</dbReference>
<dbReference type="NCBIfam" id="NF001422">
    <property type="entry name" value="PRK00296.1"/>
    <property type="match status" value="1"/>
</dbReference>
<dbReference type="Pfam" id="PF03776">
    <property type="entry name" value="MinE"/>
    <property type="match status" value="1"/>
</dbReference>
<dbReference type="SUPFAM" id="SSF55229">
    <property type="entry name" value="Cell division protein MinE topological specificity domain"/>
    <property type="match status" value="1"/>
</dbReference>
<accession>A4Y6A5</accession>
<feature type="chain" id="PRO_1000047795" description="Cell division topological specificity factor">
    <location>
        <begin position="1"/>
        <end position="85"/>
    </location>
</feature>
<gene>
    <name evidence="1" type="primary">minE</name>
    <name type="ordered locus">Sputcn32_1763</name>
</gene>
<reference key="1">
    <citation type="submission" date="2007-04" db="EMBL/GenBank/DDBJ databases">
        <title>Complete sequence of Shewanella putrefaciens CN-32.</title>
        <authorList>
            <consortium name="US DOE Joint Genome Institute"/>
            <person name="Copeland A."/>
            <person name="Lucas S."/>
            <person name="Lapidus A."/>
            <person name="Barry K."/>
            <person name="Detter J.C."/>
            <person name="Glavina del Rio T."/>
            <person name="Hammon N."/>
            <person name="Israni S."/>
            <person name="Dalin E."/>
            <person name="Tice H."/>
            <person name="Pitluck S."/>
            <person name="Chain P."/>
            <person name="Malfatti S."/>
            <person name="Shin M."/>
            <person name="Vergez L."/>
            <person name="Schmutz J."/>
            <person name="Larimer F."/>
            <person name="Land M."/>
            <person name="Hauser L."/>
            <person name="Kyrpides N."/>
            <person name="Mikhailova N."/>
            <person name="Romine M.F."/>
            <person name="Fredrickson J."/>
            <person name="Tiedje J."/>
            <person name="Richardson P."/>
        </authorList>
    </citation>
    <scope>NUCLEOTIDE SEQUENCE [LARGE SCALE GENOMIC DNA]</scope>
    <source>
        <strain>CN-32 / ATCC BAA-453</strain>
    </source>
</reference>
<keyword id="KW-0131">Cell cycle</keyword>
<keyword id="KW-0132">Cell division</keyword>
<organism>
    <name type="scientific">Shewanella putrefaciens (strain CN-32 / ATCC BAA-453)</name>
    <dbReference type="NCBI Taxonomy" id="319224"/>
    <lineage>
        <taxon>Bacteria</taxon>
        <taxon>Pseudomonadati</taxon>
        <taxon>Pseudomonadota</taxon>
        <taxon>Gammaproteobacteria</taxon>
        <taxon>Alteromonadales</taxon>
        <taxon>Shewanellaceae</taxon>
        <taxon>Shewanella</taxon>
    </lineage>
</organism>
<protein>
    <recommendedName>
        <fullName evidence="1">Cell division topological specificity factor</fullName>
    </recommendedName>
</protein>
<proteinExistence type="inferred from homology"/>